<dbReference type="EC" id="3.5.2.9" evidence="1"/>
<dbReference type="EMBL" id="AE017220">
    <property type="protein sequence ID" value="AAX64639.1"/>
    <property type="status" value="ALT_INIT"/>
    <property type="molecule type" value="Genomic_DNA"/>
</dbReference>
<dbReference type="RefSeq" id="WP_001017922.1">
    <property type="nucleotide sequence ID" value="NC_006905.1"/>
</dbReference>
<dbReference type="SMR" id="Q57RM2"/>
<dbReference type="KEGG" id="sec:SCH_0733"/>
<dbReference type="HOGENOM" id="CLU_069535_0_0_6"/>
<dbReference type="Proteomes" id="UP000000538">
    <property type="component" value="Chromosome"/>
</dbReference>
<dbReference type="GO" id="GO:0017168">
    <property type="term" value="F:5-oxoprolinase (ATP-hydrolyzing) activity"/>
    <property type="evidence" value="ECO:0007669"/>
    <property type="project" value="UniProtKB-UniRule"/>
</dbReference>
<dbReference type="GO" id="GO:0005524">
    <property type="term" value="F:ATP binding"/>
    <property type="evidence" value="ECO:0007669"/>
    <property type="project" value="UniProtKB-UniRule"/>
</dbReference>
<dbReference type="GO" id="GO:0005975">
    <property type="term" value="P:carbohydrate metabolic process"/>
    <property type="evidence" value="ECO:0007669"/>
    <property type="project" value="InterPro"/>
</dbReference>
<dbReference type="CDD" id="cd10800">
    <property type="entry name" value="LamB_YcsF_YbgL_like"/>
    <property type="match status" value="1"/>
</dbReference>
<dbReference type="Gene3D" id="3.20.20.370">
    <property type="entry name" value="Glycoside hydrolase/deacetylase"/>
    <property type="match status" value="1"/>
</dbReference>
<dbReference type="HAMAP" id="MF_00691">
    <property type="entry name" value="PxpA"/>
    <property type="match status" value="1"/>
</dbReference>
<dbReference type="InterPro" id="IPR011330">
    <property type="entry name" value="Glyco_hydro/deAcase_b/a-brl"/>
</dbReference>
<dbReference type="InterPro" id="IPR005501">
    <property type="entry name" value="LamB/YcsF/PxpA-like"/>
</dbReference>
<dbReference type="NCBIfam" id="NF003812">
    <property type="entry name" value="PRK05406.1-1"/>
    <property type="match status" value="1"/>
</dbReference>
<dbReference type="NCBIfam" id="NF003814">
    <property type="entry name" value="PRK05406.1-3"/>
    <property type="match status" value="1"/>
</dbReference>
<dbReference type="NCBIfam" id="NF003815">
    <property type="entry name" value="PRK05406.1-4"/>
    <property type="match status" value="1"/>
</dbReference>
<dbReference type="NCBIfam" id="NF003816">
    <property type="entry name" value="PRK05406.1-5"/>
    <property type="match status" value="1"/>
</dbReference>
<dbReference type="PANTHER" id="PTHR30292:SF0">
    <property type="entry name" value="5-OXOPROLINASE SUBUNIT A"/>
    <property type="match status" value="1"/>
</dbReference>
<dbReference type="PANTHER" id="PTHR30292">
    <property type="entry name" value="UNCHARACTERIZED PROTEIN YBGL-RELATED"/>
    <property type="match status" value="1"/>
</dbReference>
<dbReference type="Pfam" id="PF03746">
    <property type="entry name" value="LamB_YcsF"/>
    <property type="match status" value="1"/>
</dbReference>
<dbReference type="SUPFAM" id="SSF88713">
    <property type="entry name" value="Glycoside hydrolase/deacetylase"/>
    <property type="match status" value="1"/>
</dbReference>
<proteinExistence type="inferred from homology"/>
<feature type="chain" id="PRO_0000185037" description="5-oxoprolinase subunit A">
    <location>
        <begin position="1"/>
        <end position="244"/>
    </location>
</feature>
<gene>
    <name evidence="1" type="primary">pxpA</name>
    <name type="ordered locus">SCH_0733</name>
</gene>
<evidence type="ECO:0000255" key="1">
    <source>
        <dbReference type="HAMAP-Rule" id="MF_00691"/>
    </source>
</evidence>
<evidence type="ECO:0000305" key="2"/>
<organism>
    <name type="scientific">Salmonella choleraesuis (strain SC-B67)</name>
    <dbReference type="NCBI Taxonomy" id="321314"/>
    <lineage>
        <taxon>Bacteria</taxon>
        <taxon>Pseudomonadati</taxon>
        <taxon>Pseudomonadota</taxon>
        <taxon>Gammaproteobacteria</taxon>
        <taxon>Enterobacterales</taxon>
        <taxon>Enterobacteriaceae</taxon>
        <taxon>Salmonella</taxon>
    </lineage>
</organism>
<accession>Q57RM2</accession>
<comment type="function">
    <text evidence="1">Catalyzes the cleavage of 5-oxoproline to form L-glutamate coupled to the hydrolysis of ATP to ADP and inorganic phosphate.</text>
</comment>
<comment type="catalytic activity">
    <reaction evidence="1">
        <text>5-oxo-L-proline + ATP + 2 H2O = L-glutamate + ADP + phosphate + H(+)</text>
        <dbReference type="Rhea" id="RHEA:10348"/>
        <dbReference type="ChEBI" id="CHEBI:15377"/>
        <dbReference type="ChEBI" id="CHEBI:15378"/>
        <dbReference type="ChEBI" id="CHEBI:29985"/>
        <dbReference type="ChEBI" id="CHEBI:30616"/>
        <dbReference type="ChEBI" id="CHEBI:43474"/>
        <dbReference type="ChEBI" id="CHEBI:58402"/>
        <dbReference type="ChEBI" id="CHEBI:456216"/>
        <dbReference type="EC" id="3.5.2.9"/>
    </reaction>
</comment>
<comment type="subunit">
    <text evidence="1">Forms a complex composed of PxpA, PxpB and PxpC.</text>
</comment>
<comment type="similarity">
    <text evidence="1">Belongs to the LamB/PxpA family.</text>
</comment>
<comment type="sequence caution" evidence="2">
    <conflict type="erroneous initiation">
        <sequence resource="EMBL-CDS" id="AAX64639"/>
    </conflict>
</comment>
<keyword id="KW-0067">ATP-binding</keyword>
<keyword id="KW-0378">Hydrolase</keyword>
<keyword id="KW-0547">Nucleotide-binding</keyword>
<reference key="1">
    <citation type="journal article" date="2005" name="Nucleic Acids Res.">
        <title>The genome sequence of Salmonella enterica serovar Choleraesuis, a highly invasive and resistant zoonotic pathogen.</title>
        <authorList>
            <person name="Chiu C.-H."/>
            <person name="Tang P."/>
            <person name="Chu C."/>
            <person name="Hu S."/>
            <person name="Bao Q."/>
            <person name="Yu J."/>
            <person name="Chou Y.-Y."/>
            <person name="Wang H.-S."/>
            <person name="Lee Y.-S."/>
        </authorList>
    </citation>
    <scope>NUCLEOTIDE SEQUENCE [LARGE SCALE GENOMIC DNA]</scope>
    <source>
        <strain>SC-B67</strain>
    </source>
</reference>
<name>PXPA_SALCH</name>
<protein>
    <recommendedName>
        <fullName evidence="1">5-oxoprolinase subunit A</fullName>
        <shortName evidence="1">5-OPase subunit A</shortName>
        <ecNumber evidence="1">3.5.2.9</ecNumber>
    </recommendedName>
    <alternativeName>
        <fullName evidence="1">5-oxoprolinase (ATP-hydrolyzing) subunit A</fullName>
    </alternativeName>
</protein>
<sequence length="244" mass="26077">MNIDLNADVGEGCASDSELLTLVSSANIACGFHAGDAQTMLTCVREALKNGVAIGAHPSFPDRDNFGRTAMVLPPETVYAQTLYQIGALGAIVQAQGGVMRHVKPHGMLYNQAAKDPHLAQAIAKAVHDYDPSLILVGLAGSELIRAGERHRLVTRQEVFADRGYQADGSLVPRMQPGALIHDEEQALAQTLDMVQAGRVKSVTGVWTTVTAQTVCIHGDGEYALAFARRLRAAFNARNIHVIA</sequence>